<dbReference type="EC" id="6.1.1.10" evidence="1"/>
<dbReference type="EMBL" id="AP009240">
    <property type="protein sequence ID" value="BAG77907.1"/>
    <property type="molecule type" value="Genomic_DNA"/>
</dbReference>
<dbReference type="RefSeq" id="WP_001295427.1">
    <property type="nucleotide sequence ID" value="NC_011415.1"/>
</dbReference>
<dbReference type="SMR" id="B6HYV5"/>
<dbReference type="GeneID" id="75206361"/>
<dbReference type="KEGG" id="ecy:ECSE_2383"/>
<dbReference type="HOGENOM" id="CLU_009710_7_0_6"/>
<dbReference type="Proteomes" id="UP000008199">
    <property type="component" value="Chromosome"/>
</dbReference>
<dbReference type="GO" id="GO:0005829">
    <property type="term" value="C:cytosol"/>
    <property type="evidence" value="ECO:0007669"/>
    <property type="project" value="TreeGrafter"/>
</dbReference>
<dbReference type="GO" id="GO:0005524">
    <property type="term" value="F:ATP binding"/>
    <property type="evidence" value="ECO:0007669"/>
    <property type="project" value="UniProtKB-UniRule"/>
</dbReference>
<dbReference type="GO" id="GO:0046872">
    <property type="term" value="F:metal ion binding"/>
    <property type="evidence" value="ECO:0007669"/>
    <property type="project" value="UniProtKB-KW"/>
</dbReference>
<dbReference type="GO" id="GO:0004825">
    <property type="term" value="F:methionine-tRNA ligase activity"/>
    <property type="evidence" value="ECO:0007669"/>
    <property type="project" value="UniProtKB-UniRule"/>
</dbReference>
<dbReference type="GO" id="GO:0000049">
    <property type="term" value="F:tRNA binding"/>
    <property type="evidence" value="ECO:0007669"/>
    <property type="project" value="UniProtKB-KW"/>
</dbReference>
<dbReference type="GO" id="GO:0006431">
    <property type="term" value="P:methionyl-tRNA aminoacylation"/>
    <property type="evidence" value="ECO:0007669"/>
    <property type="project" value="UniProtKB-UniRule"/>
</dbReference>
<dbReference type="CDD" id="cd07957">
    <property type="entry name" value="Anticodon_Ia_Met"/>
    <property type="match status" value="1"/>
</dbReference>
<dbReference type="CDD" id="cd00814">
    <property type="entry name" value="MetRS_core"/>
    <property type="match status" value="1"/>
</dbReference>
<dbReference type="CDD" id="cd02800">
    <property type="entry name" value="tRNA_bind_EcMetRS_like"/>
    <property type="match status" value="1"/>
</dbReference>
<dbReference type="FunFam" id="1.10.730.10:FF:000005">
    <property type="entry name" value="Methionine--tRNA ligase"/>
    <property type="match status" value="1"/>
</dbReference>
<dbReference type="FunFam" id="2.20.28.20:FF:000001">
    <property type="entry name" value="Methionine--tRNA ligase"/>
    <property type="match status" value="1"/>
</dbReference>
<dbReference type="FunFam" id="2.40.50.140:FF:000042">
    <property type="entry name" value="Methionine--tRNA ligase"/>
    <property type="match status" value="1"/>
</dbReference>
<dbReference type="Gene3D" id="3.40.50.620">
    <property type="entry name" value="HUPs"/>
    <property type="match status" value="1"/>
</dbReference>
<dbReference type="Gene3D" id="1.10.730.10">
    <property type="entry name" value="Isoleucyl-tRNA Synthetase, Domain 1"/>
    <property type="match status" value="1"/>
</dbReference>
<dbReference type="Gene3D" id="2.20.28.20">
    <property type="entry name" value="Methionyl-tRNA synthetase, Zn-domain"/>
    <property type="match status" value="1"/>
</dbReference>
<dbReference type="Gene3D" id="2.40.50.140">
    <property type="entry name" value="Nucleic acid-binding proteins"/>
    <property type="match status" value="1"/>
</dbReference>
<dbReference type="HAMAP" id="MF_00098">
    <property type="entry name" value="Met_tRNA_synth_type1"/>
    <property type="match status" value="1"/>
</dbReference>
<dbReference type="InterPro" id="IPR001412">
    <property type="entry name" value="aa-tRNA-synth_I_CS"/>
</dbReference>
<dbReference type="InterPro" id="IPR041872">
    <property type="entry name" value="Anticodon_Met"/>
</dbReference>
<dbReference type="InterPro" id="IPR004495">
    <property type="entry name" value="Met-tRNA-synth_bsu_C"/>
</dbReference>
<dbReference type="InterPro" id="IPR023458">
    <property type="entry name" value="Met-tRNA_ligase_1"/>
</dbReference>
<dbReference type="InterPro" id="IPR014758">
    <property type="entry name" value="Met-tRNA_synth"/>
</dbReference>
<dbReference type="InterPro" id="IPR015413">
    <property type="entry name" value="Methionyl/Leucyl_tRNA_Synth"/>
</dbReference>
<dbReference type="InterPro" id="IPR033911">
    <property type="entry name" value="MetRS_core"/>
</dbReference>
<dbReference type="InterPro" id="IPR029038">
    <property type="entry name" value="MetRS_Zn"/>
</dbReference>
<dbReference type="InterPro" id="IPR012340">
    <property type="entry name" value="NA-bd_OB-fold"/>
</dbReference>
<dbReference type="InterPro" id="IPR014729">
    <property type="entry name" value="Rossmann-like_a/b/a_fold"/>
</dbReference>
<dbReference type="InterPro" id="IPR002547">
    <property type="entry name" value="tRNA-bd_dom"/>
</dbReference>
<dbReference type="InterPro" id="IPR009080">
    <property type="entry name" value="tRNAsynth_Ia_anticodon-bd"/>
</dbReference>
<dbReference type="NCBIfam" id="TIGR00398">
    <property type="entry name" value="metG"/>
    <property type="match status" value="1"/>
</dbReference>
<dbReference type="NCBIfam" id="TIGR00399">
    <property type="entry name" value="metG_C_term"/>
    <property type="match status" value="1"/>
</dbReference>
<dbReference type="NCBIfam" id="NF001100">
    <property type="entry name" value="PRK00133.1"/>
    <property type="match status" value="1"/>
</dbReference>
<dbReference type="PANTHER" id="PTHR45765">
    <property type="entry name" value="METHIONINE--TRNA LIGASE"/>
    <property type="match status" value="1"/>
</dbReference>
<dbReference type="PANTHER" id="PTHR45765:SF1">
    <property type="entry name" value="METHIONINE--TRNA LIGASE, CYTOPLASMIC"/>
    <property type="match status" value="1"/>
</dbReference>
<dbReference type="Pfam" id="PF19303">
    <property type="entry name" value="Anticodon_3"/>
    <property type="match status" value="1"/>
</dbReference>
<dbReference type="Pfam" id="PF09334">
    <property type="entry name" value="tRNA-synt_1g"/>
    <property type="match status" value="1"/>
</dbReference>
<dbReference type="Pfam" id="PF01588">
    <property type="entry name" value="tRNA_bind"/>
    <property type="match status" value="1"/>
</dbReference>
<dbReference type="PRINTS" id="PR01041">
    <property type="entry name" value="TRNASYNTHMET"/>
</dbReference>
<dbReference type="SUPFAM" id="SSF47323">
    <property type="entry name" value="Anticodon-binding domain of a subclass of class I aminoacyl-tRNA synthetases"/>
    <property type="match status" value="1"/>
</dbReference>
<dbReference type="SUPFAM" id="SSF57770">
    <property type="entry name" value="Methionyl-tRNA synthetase (MetRS), Zn-domain"/>
    <property type="match status" value="1"/>
</dbReference>
<dbReference type="SUPFAM" id="SSF50249">
    <property type="entry name" value="Nucleic acid-binding proteins"/>
    <property type="match status" value="1"/>
</dbReference>
<dbReference type="SUPFAM" id="SSF52374">
    <property type="entry name" value="Nucleotidylyl transferase"/>
    <property type="match status" value="1"/>
</dbReference>
<dbReference type="PROSITE" id="PS00178">
    <property type="entry name" value="AA_TRNA_LIGASE_I"/>
    <property type="match status" value="1"/>
</dbReference>
<dbReference type="PROSITE" id="PS50886">
    <property type="entry name" value="TRBD"/>
    <property type="match status" value="1"/>
</dbReference>
<accession>B6HYV5</accession>
<reference key="1">
    <citation type="journal article" date="2008" name="DNA Res.">
        <title>Complete genome sequence and comparative analysis of the wild-type commensal Escherichia coli strain SE11 isolated from a healthy adult.</title>
        <authorList>
            <person name="Oshima K."/>
            <person name="Toh H."/>
            <person name="Ogura Y."/>
            <person name="Sasamoto H."/>
            <person name="Morita H."/>
            <person name="Park S.-H."/>
            <person name="Ooka T."/>
            <person name="Iyoda S."/>
            <person name="Taylor T.D."/>
            <person name="Hayashi T."/>
            <person name="Itoh K."/>
            <person name="Hattori M."/>
        </authorList>
    </citation>
    <scope>NUCLEOTIDE SEQUENCE [LARGE SCALE GENOMIC DNA]</scope>
    <source>
        <strain>SE11</strain>
    </source>
</reference>
<name>SYM_ECOSE</name>
<feature type="chain" id="PRO_1000093714" description="Methionine--tRNA ligase">
    <location>
        <begin position="1"/>
        <end position="677"/>
    </location>
</feature>
<feature type="domain" description="tRNA-binding" evidence="1">
    <location>
        <begin position="575"/>
        <end position="677"/>
    </location>
</feature>
<feature type="short sequence motif" description="'HIGH' region">
    <location>
        <begin position="15"/>
        <end position="25"/>
    </location>
</feature>
<feature type="short sequence motif" description="'KMSKS' region">
    <location>
        <begin position="333"/>
        <end position="337"/>
    </location>
</feature>
<feature type="binding site" evidence="1">
    <location>
        <position position="146"/>
    </location>
    <ligand>
        <name>Zn(2+)</name>
        <dbReference type="ChEBI" id="CHEBI:29105"/>
    </ligand>
</feature>
<feature type="binding site" evidence="1">
    <location>
        <position position="149"/>
    </location>
    <ligand>
        <name>Zn(2+)</name>
        <dbReference type="ChEBI" id="CHEBI:29105"/>
    </ligand>
</feature>
<feature type="binding site" evidence="1">
    <location>
        <position position="159"/>
    </location>
    <ligand>
        <name>Zn(2+)</name>
        <dbReference type="ChEBI" id="CHEBI:29105"/>
    </ligand>
</feature>
<feature type="binding site" evidence="1">
    <location>
        <position position="162"/>
    </location>
    <ligand>
        <name>Zn(2+)</name>
        <dbReference type="ChEBI" id="CHEBI:29105"/>
    </ligand>
</feature>
<feature type="binding site" evidence="1">
    <location>
        <position position="336"/>
    </location>
    <ligand>
        <name>ATP</name>
        <dbReference type="ChEBI" id="CHEBI:30616"/>
    </ligand>
</feature>
<protein>
    <recommendedName>
        <fullName evidence="1">Methionine--tRNA ligase</fullName>
        <ecNumber evidence="1">6.1.1.10</ecNumber>
    </recommendedName>
    <alternativeName>
        <fullName evidence="1">Methionyl-tRNA synthetase</fullName>
        <shortName evidence="1">MetRS</shortName>
    </alternativeName>
</protein>
<gene>
    <name evidence="1" type="primary">metG</name>
    <name type="ordered locus">ECSE_2383</name>
</gene>
<proteinExistence type="inferred from homology"/>
<keyword id="KW-0030">Aminoacyl-tRNA synthetase</keyword>
<keyword id="KW-0067">ATP-binding</keyword>
<keyword id="KW-0963">Cytoplasm</keyword>
<keyword id="KW-0436">Ligase</keyword>
<keyword id="KW-0479">Metal-binding</keyword>
<keyword id="KW-0547">Nucleotide-binding</keyword>
<keyword id="KW-0648">Protein biosynthesis</keyword>
<keyword id="KW-0694">RNA-binding</keyword>
<keyword id="KW-0820">tRNA-binding</keyword>
<keyword id="KW-0862">Zinc</keyword>
<organism>
    <name type="scientific">Escherichia coli (strain SE11)</name>
    <dbReference type="NCBI Taxonomy" id="409438"/>
    <lineage>
        <taxon>Bacteria</taxon>
        <taxon>Pseudomonadati</taxon>
        <taxon>Pseudomonadota</taxon>
        <taxon>Gammaproteobacteria</taxon>
        <taxon>Enterobacterales</taxon>
        <taxon>Enterobacteriaceae</taxon>
        <taxon>Escherichia</taxon>
    </lineage>
</organism>
<evidence type="ECO:0000255" key="1">
    <source>
        <dbReference type="HAMAP-Rule" id="MF_00098"/>
    </source>
</evidence>
<sequence length="677" mass="76241">MTQVAKKILVTCALPYANGSIHLGHMLEHIQADVWVRYQRMRGHEVNFICADDAHGTPIMLKAQQLGITPEQMIGEMSQEHQTDFAGFNISYDNYHSTHSEENRQLSELIYSRLKENGFIKNRTISQLYDPEKGMFLPDRFVKGTCPKCKSPDQYGDNCEVCGATYSPTELIEPKSVVSGATPVMRDSEHFFFDLPSFSEMLQAWTRSGALQEQVANKMQEWFESGLQQWDISRDAPYFGFEIPNAPGKYFYVWLDAPIGYMGSFKNLCDKRGDSVSFDEYWKKDSTAELYHFIGKDIVYFHSLFWPAMLEGSNFRKPTNLFVHGYVTVNGAKMSKSRGTFIKASTWLNHFDADSLRYYYTAKLSSRIDDIDLNLEDFVQRVNADIVNKVVNLASRNAGFINKRFDGVLASELADPQLYKTFTDAAEVIGEAWESREFGKAVREIMALADLANRYVDEQAPWVVAKQEGRDADLQAICSMGINLFRVLMTYLKPVLPKLTERAEAFLNTELTWDGIQQPLLGHKVNPFKALYNRIDMKQVEALVEASKEEVKAAAAPVTGPLADDPIQETITFDDFAKVDLRVALIENAEFVEGSDKLLRLTLDLGGEKRNVFSGIRSAYPDPQALIGRHTIMVANLAPRKMRFGISEGMVMAAGPGGKDIFLLSPDAGAKPGHQVK</sequence>
<comment type="function">
    <text evidence="1">Is required not only for elongation of protein synthesis but also for the initiation of all mRNA translation through initiator tRNA(fMet) aminoacylation.</text>
</comment>
<comment type="catalytic activity">
    <reaction evidence="1">
        <text>tRNA(Met) + L-methionine + ATP = L-methionyl-tRNA(Met) + AMP + diphosphate</text>
        <dbReference type="Rhea" id="RHEA:13481"/>
        <dbReference type="Rhea" id="RHEA-COMP:9667"/>
        <dbReference type="Rhea" id="RHEA-COMP:9698"/>
        <dbReference type="ChEBI" id="CHEBI:30616"/>
        <dbReference type="ChEBI" id="CHEBI:33019"/>
        <dbReference type="ChEBI" id="CHEBI:57844"/>
        <dbReference type="ChEBI" id="CHEBI:78442"/>
        <dbReference type="ChEBI" id="CHEBI:78530"/>
        <dbReference type="ChEBI" id="CHEBI:456215"/>
        <dbReference type="EC" id="6.1.1.10"/>
    </reaction>
</comment>
<comment type="cofactor">
    <cofactor evidence="1">
        <name>Zn(2+)</name>
        <dbReference type="ChEBI" id="CHEBI:29105"/>
    </cofactor>
    <text evidence="1">Binds 1 zinc ion per subunit.</text>
</comment>
<comment type="subunit">
    <text evidence="1">Homodimer.</text>
</comment>
<comment type="subcellular location">
    <subcellularLocation>
        <location evidence="1">Cytoplasm</location>
    </subcellularLocation>
</comment>
<comment type="similarity">
    <text evidence="1">Belongs to the class-I aminoacyl-tRNA synthetase family. MetG type 1 subfamily.</text>
</comment>